<gene>
    <name type="ordered locus">ESA_01462</name>
</gene>
<feature type="chain" id="PRO_1000044792" description="UPF0260 protein ESA_01462">
    <location>
        <begin position="1"/>
        <end position="148"/>
    </location>
</feature>
<sequence>MTETPFWQRKTLDEMSDAEWESLCDGCGQCCLHKLMDEDTDEIYFTNVACRQLNIKTCQCRNYERRFEYEPDCIKLTRENLPTFEWLPPTCAYRLLAEGKNLPLWHPLRTGSKAAMHAERISVRHIAVKESEVRDWQDHILNKPDWAE</sequence>
<keyword id="KW-1185">Reference proteome</keyword>
<protein>
    <recommendedName>
        <fullName evidence="1">UPF0260 protein ESA_01462</fullName>
    </recommendedName>
</protein>
<name>Y1462_CROS8</name>
<evidence type="ECO:0000255" key="1">
    <source>
        <dbReference type="HAMAP-Rule" id="MF_00676"/>
    </source>
</evidence>
<accession>A7MNK3</accession>
<dbReference type="EMBL" id="CP000783">
    <property type="protein sequence ID" value="ABU76720.1"/>
    <property type="molecule type" value="Genomic_DNA"/>
</dbReference>
<dbReference type="RefSeq" id="WP_007868487.1">
    <property type="nucleotide sequence ID" value="NC_009778.1"/>
</dbReference>
<dbReference type="SMR" id="A7MNK3"/>
<dbReference type="KEGG" id="esa:ESA_01462"/>
<dbReference type="HOGENOM" id="CLU_109769_2_0_6"/>
<dbReference type="Proteomes" id="UP000000260">
    <property type="component" value="Chromosome"/>
</dbReference>
<dbReference type="HAMAP" id="MF_00676">
    <property type="entry name" value="UPF0260"/>
    <property type="match status" value="1"/>
</dbReference>
<dbReference type="InterPro" id="IPR005358">
    <property type="entry name" value="Puta_zinc/iron-chelating_dom"/>
</dbReference>
<dbReference type="InterPro" id="IPR008228">
    <property type="entry name" value="UCP006173"/>
</dbReference>
<dbReference type="NCBIfam" id="NF003498">
    <property type="entry name" value="PRK05170.1-1"/>
    <property type="match status" value="1"/>
</dbReference>
<dbReference type="NCBIfam" id="NF003501">
    <property type="entry name" value="PRK05170.1-5"/>
    <property type="match status" value="1"/>
</dbReference>
<dbReference type="NCBIfam" id="NF003503">
    <property type="entry name" value="PRK05170.2-1"/>
    <property type="match status" value="1"/>
</dbReference>
<dbReference type="NCBIfam" id="NF003507">
    <property type="entry name" value="PRK05170.2-5"/>
    <property type="match status" value="1"/>
</dbReference>
<dbReference type="PANTHER" id="PTHR37421">
    <property type="entry name" value="UPF0260 PROTEIN YCGN"/>
    <property type="match status" value="1"/>
</dbReference>
<dbReference type="PANTHER" id="PTHR37421:SF1">
    <property type="entry name" value="UPF0260 PROTEIN YCGN"/>
    <property type="match status" value="1"/>
</dbReference>
<dbReference type="Pfam" id="PF03692">
    <property type="entry name" value="CxxCxxCC"/>
    <property type="match status" value="1"/>
</dbReference>
<dbReference type="PIRSF" id="PIRSF006173">
    <property type="entry name" value="UCP006173"/>
    <property type="match status" value="1"/>
</dbReference>
<comment type="similarity">
    <text evidence="1">Belongs to the UPF0260 family.</text>
</comment>
<proteinExistence type="inferred from homology"/>
<organism>
    <name type="scientific">Cronobacter sakazakii (strain ATCC BAA-894)</name>
    <name type="common">Enterobacter sakazakii</name>
    <dbReference type="NCBI Taxonomy" id="290339"/>
    <lineage>
        <taxon>Bacteria</taxon>
        <taxon>Pseudomonadati</taxon>
        <taxon>Pseudomonadota</taxon>
        <taxon>Gammaproteobacteria</taxon>
        <taxon>Enterobacterales</taxon>
        <taxon>Enterobacteriaceae</taxon>
        <taxon>Cronobacter</taxon>
    </lineage>
</organism>
<reference key="1">
    <citation type="journal article" date="2010" name="PLoS ONE">
        <title>Genome sequence of Cronobacter sakazakii BAA-894 and comparative genomic hybridization analysis with other Cronobacter species.</title>
        <authorList>
            <person name="Kucerova E."/>
            <person name="Clifton S.W."/>
            <person name="Xia X.Q."/>
            <person name="Long F."/>
            <person name="Porwollik S."/>
            <person name="Fulton L."/>
            <person name="Fronick C."/>
            <person name="Minx P."/>
            <person name="Kyung K."/>
            <person name="Warren W."/>
            <person name="Fulton R."/>
            <person name="Feng D."/>
            <person name="Wollam A."/>
            <person name="Shah N."/>
            <person name="Bhonagiri V."/>
            <person name="Nash W.E."/>
            <person name="Hallsworth-Pepin K."/>
            <person name="Wilson R.K."/>
            <person name="McClelland M."/>
            <person name="Forsythe S.J."/>
        </authorList>
    </citation>
    <scope>NUCLEOTIDE SEQUENCE [LARGE SCALE GENOMIC DNA]</scope>
    <source>
        <strain>ATCC BAA-894</strain>
    </source>
</reference>